<keyword id="KW-0997">Cell inner membrane</keyword>
<keyword id="KW-1003">Cell membrane</keyword>
<keyword id="KW-0472">Membrane</keyword>
<keyword id="KW-1185">Reference proteome</keyword>
<keyword id="KW-0812">Transmembrane</keyword>
<keyword id="KW-1133">Transmembrane helix</keyword>
<keyword id="KW-0813">Transport</keyword>
<dbReference type="EMBL" id="AL590842">
    <property type="protein sequence ID" value="CAL22273.1"/>
    <property type="molecule type" value="Genomic_DNA"/>
</dbReference>
<dbReference type="EMBL" id="AE009952">
    <property type="protein sequence ID" value="AAM83772.1"/>
    <property type="molecule type" value="Genomic_DNA"/>
</dbReference>
<dbReference type="EMBL" id="AE017042">
    <property type="protein sequence ID" value="AAS64003.1"/>
    <property type="molecule type" value="Genomic_DNA"/>
</dbReference>
<dbReference type="PIR" id="AF0448">
    <property type="entry name" value="AF0448"/>
</dbReference>
<dbReference type="RefSeq" id="WP_002210094.1">
    <property type="nucleotide sequence ID" value="NZ_WUCM01000032.1"/>
</dbReference>
<dbReference type="RefSeq" id="YP_002348569.1">
    <property type="nucleotide sequence ID" value="NC_003143.1"/>
</dbReference>
<dbReference type="SMR" id="Q8ZAU9"/>
<dbReference type="STRING" id="214092.YPO3685"/>
<dbReference type="PaxDb" id="214092-YPO3685"/>
<dbReference type="DNASU" id="1145125"/>
<dbReference type="EnsemblBacteria" id="AAS64003">
    <property type="protein sequence ID" value="AAS64003"/>
    <property type="gene ID" value="YP_3858"/>
</dbReference>
<dbReference type="GeneID" id="57975110"/>
<dbReference type="KEGG" id="ype:YPO3685"/>
<dbReference type="KEGG" id="ypk:y0178"/>
<dbReference type="KEGG" id="ypm:YP_3858"/>
<dbReference type="PATRIC" id="fig|214092.21.peg.4192"/>
<dbReference type="eggNOG" id="COG1566">
    <property type="taxonomic scope" value="Bacteria"/>
</dbReference>
<dbReference type="HOGENOM" id="CLU_018816_15_2_6"/>
<dbReference type="OMA" id="MFSPWTR"/>
<dbReference type="OrthoDB" id="9811754at2"/>
<dbReference type="Proteomes" id="UP000000815">
    <property type="component" value="Chromosome"/>
</dbReference>
<dbReference type="Proteomes" id="UP000001019">
    <property type="component" value="Chromosome"/>
</dbReference>
<dbReference type="Proteomes" id="UP000002490">
    <property type="component" value="Chromosome"/>
</dbReference>
<dbReference type="GO" id="GO:0005886">
    <property type="term" value="C:plasma membrane"/>
    <property type="evidence" value="ECO:0007669"/>
    <property type="project" value="UniProtKB-SubCell"/>
</dbReference>
<dbReference type="GO" id="GO:0022857">
    <property type="term" value="F:transmembrane transporter activity"/>
    <property type="evidence" value="ECO:0000318"/>
    <property type="project" value="GO_Central"/>
</dbReference>
<dbReference type="GO" id="GO:0055085">
    <property type="term" value="P:transmembrane transport"/>
    <property type="evidence" value="ECO:0000318"/>
    <property type="project" value="GO_Central"/>
</dbReference>
<dbReference type="Gene3D" id="2.40.30.170">
    <property type="match status" value="1"/>
</dbReference>
<dbReference type="Gene3D" id="2.40.50.100">
    <property type="match status" value="1"/>
</dbReference>
<dbReference type="HAMAP" id="MF_01544">
    <property type="entry name" value="AaeA"/>
    <property type="match status" value="1"/>
</dbReference>
<dbReference type="InterPro" id="IPR043602">
    <property type="entry name" value="CusB-like_dom_1"/>
</dbReference>
<dbReference type="InterPro" id="IPR032317">
    <property type="entry name" value="CusB_D23"/>
</dbReference>
<dbReference type="InterPro" id="IPR050393">
    <property type="entry name" value="MFP_Efflux_Pump"/>
</dbReference>
<dbReference type="InterPro" id="IPR022871">
    <property type="entry name" value="PHBA_efflux_pump_AaeA"/>
</dbReference>
<dbReference type="InterPro" id="IPR006143">
    <property type="entry name" value="RND_pump_MFP"/>
</dbReference>
<dbReference type="NCBIfam" id="NF007850">
    <property type="entry name" value="PRK10559.1"/>
    <property type="match status" value="1"/>
</dbReference>
<dbReference type="NCBIfam" id="TIGR01730">
    <property type="entry name" value="RND_mfp"/>
    <property type="match status" value="1"/>
</dbReference>
<dbReference type="PANTHER" id="PTHR30367:SF12">
    <property type="entry name" value="P-HYDROXYBENZOIC ACID EFFLUX PUMP SUBUNIT AAEA"/>
    <property type="match status" value="1"/>
</dbReference>
<dbReference type="PANTHER" id="PTHR30367">
    <property type="entry name" value="P-HYDROXYBENZOIC ACID EFFLUX PUMP SUBUNIT AAEA-RELATED"/>
    <property type="match status" value="1"/>
</dbReference>
<dbReference type="Pfam" id="PF00529">
    <property type="entry name" value="CusB_dom_1"/>
    <property type="match status" value="1"/>
</dbReference>
<dbReference type="Pfam" id="PF16576">
    <property type="entry name" value="HlyD_D23"/>
    <property type="match status" value="1"/>
</dbReference>
<dbReference type="SUPFAM" id="SSF111369">
    <property type="entry name" value="HlyD-like secretion proteins"/>
    <property type="match status" value="1"/>
</dbReference>
<proteinExistence type="inferred from homology"/>
<sequence>MSTFSLKIIRVGITVLVVVLAVIAIFNVWAFYTESPWTRDAKFTADVVAIAPDVSGLLTEVPVKDNQLVQKGQILFVIDQPRYQQALAEAEADVAYYQTLAAEKQRESSRRHRLGIQALSQEEIDQASNVLQTVQHQLAKAIAVRDLARLDLERTTVRAPAEGWVTNLNVHAGEFINRGATAVALVKKDTFYILAYLEETKLEGVKPGYRAEITPLGSNRILHGTVDSISAGVTNSSSSADSKGLATIDNNLEWVRLAQRVPVKIHLDSEDQQYLYPAGTTATVVITGPNDRDPHQASPMTKLMHRLREFG</sequence>
<organism>
    <name type="scientific">Yersinia pestis</name>
    <dbReference type="NCBI Taxonomy" id="632"/>
    <lineage>
        <taxon>Bacteria</taxon>
        <taxon>Pseudomonadati</taxon>
        <taxon>Pseudomonadota</taxon>
        <taxon>Gammaproteobacteria</taxon>
        <taxon>Enterobacterales</taxon>
        <taxon>Yersiniaceae</taxon>
        <taxon>Yersinia</taxon>
    </lineage>
</organism>
<feature type="chain" id="PRO_0000201858" description="p-hydroxybenzoic acid efflux pump subunit AaeA">
    <location>
        <begin position="1"/>
        <end position="311"/>
    </location>
</feature>
<feature type="transmembrane region" description="Helical" evidence="1">
    <location>
        <begin position="11"/>
        <end position="31"/>
    </location>
</feature>
<reference key="1">
    <citation type="journal article" date="2001" name="Nature">
        <title>Genome sequence of Yersinia pestis, the causative agent of plague.</title>
        <authorList>
            <person name="Parkhill J."/>
            <person name="Wren B.W."/>
            <person name="Thomson N.R."/>
            <person name="Titball R.W."/>
            <person name="Holden M.T.G."/>
            <person name="Prentice M.B."/>
            <person name="Sebaihia M."/>
            <person name="James K.D."/>
            <person name="Churcher C.M."/>
            <person name="Mungall K.L."/>
            <person name="Baker S."/>
            <person name="Basham D."/>
            <person name="Bentley S.D."/>
            <person name="Brooks K."/>
            <person name="Cerdeno-Tarraga A.-M."/>
            <person name="Chillingworth T."/>
            <person name="Cronin A."/>
            <person name="Davies R.M."/>
            <person name="Davis P."/>
            <person name="Dougan G."/>
            <person name="Feltwell T."/>
            <person name="Hamlin N."/>
            <person name="Holroyd S."/>
            <person name="Jagels K."/>
            <person name="Karlyshev A.V."/>
            <person name="Leather S."/>
            <person name="Moule S."/>
            <person name="Oyston P.C.F."/>
            <person name="Quail M.A."/>
            <person name="Rutherford K.M."/>
            <person name="Simmonds M."/>
            <person name="Skelton J."/>
            <person name="Stevens K."/>
            <person name="Whitehead S."/>
            <person name="Barrell B.G."/>
        </authorList>
    </citation>
    <scope>NUCLEOTIDE SEQUENCE [LARGE SCALE GENOMIC DNA]</scope>
    <source>
        <strain>CO-92 / Biovar Orientalis</strain>
    </source>
</reference>
<reference key="2">
    <citation type="journal article" date="2002" name="J. Bacteriol.">
        <title>Genome sequence of Yersinia pestis KIM.</title>
        <authorList>
            <person name="Deng W."/>
            <person name="Burland V."/>
            <person name="Plunkett G. III"/>
            <person name="Boutin A."/>
            <person name="Mayhew G.F."/>
            <person name="Liss P."/>
            <person name="Perna N.T."/>
            <person name="Rose D.J."/>
            <person name="Mau B."/>
            <person name="Zhou S."/>
            <person name="Schwartz D.C."/>
            <person name="Fetherston J.D."/>
            <person name="Lindler L.E."/>
            <person name="Brubaker R.R."/>
            <person name="Plano G.V."/>
            <person name="Straley S.C."/>
            <person name="McDonough K.A."/>
            <person name="Nilles M.L."/>
            <person name="Matson J.S."/>
            <person name="Blattner F.R."/>
            <person name="Perry R.D."/>
        </authorList>
    </citation>
    <scope>NUCLEOTIDE SEQUENCE [LARGE SCALE GENOMIC DNA]</scope>
    <source>
        <strain>KIM10+ / Biovar Mediaevalis</strain>
    </source>
</reference>
<reference key="3">
    <citation type="journal article" date="2004" name="DNA Res.">
        <title>Complete genome sequence of Yersinia pestis strain 91001, an isolate avirulent to humans.</title>
        <authorList>
            <person name="Song Y."/>
            <person name="Tong Z."/>
            <person name="Wang J."/>
            <person name="Wang L."/>
            <person name="Guo Z."/>
            <person name="Han Y."/>
            <person name="Zhang J."/>
            <person name="Pei D."/>
            <person name="Zhou D."/>
            <person name="Qin H."/>
            <person name="Pang X."/>
            <person name="Han Y."/>
            <person name="Zhai J."/>
            <person name="Li M."/>
            <person name="Cui B."/>
            <person name="Qi Z."/>
            <person name="Jin L."/>
            <person name="Dai R."/>
            <person name="Chen F."/>
            <person name="Li S."/>
            <person name="Ye C."/>
            <person name="Du Z."/>
            <person name="Lin W."/>
            <person name="Wang J."/>
            <person name="Yu J."/>
            <person name="Yang H."/>
            <person name="Wang J."/>
            <person name="Huang P."/>
            <person name="Yang R."/>
        </authorList>
    </citation>
    <scope>NUCLEOTIDE SEQUENCE [LARGE SCALE GENOMIC DNA]</scope>
    <source>
        <strain>91001 / Biovar Mediaevalis</strain>
    </source>
</reference>
<comment type="function">
    <text evidence="1">Forms an efflux pump with AaeB.</text>
</comment>
<comment type="subcellular location">
    <subcellularLocation>
        <location evidence="1">Cell inner membrane</location>
        <topology evidence="1">Single-pass membrane protein</topology>
    </subcellularLocation>
</comment>
<comment type="similarity">
    <text evidence="1">Belongs to the membrane fusion protein (MFP) (TC 8.A.1) family.</text>
</comment>
<accession>Q8ZAU9</accession>
<accession>Q0WAW9</accession>
<accession>Q74PP0</accession>
<accession>Q7CL75</accession>
<protein>
    <recommendedName>
        <fullName evidence="1">p-hydroxybenzoic acid efflux pump subunit AaeA</fullName>
        <shortName evidence="1">pHBA efflux pump protein A</shortName>
    </recommendedName>
</protein>
<name>AAEA_YERPE</name>
<gene>
    <name evidence="1" type="primary">aaeA</name>
    <name type="ordered locus">YPO3685</name>
    <name type="ordered locus">y0178</name>
    <name type="ordered locus">YP_3858</name>
</gene>
<evidence type="ECO:0000255" key="1">
    <source>
        <dbReference type="HAMAP-Rule" id="MF_01544"/>
    </source>
</evidence>